<gene>
    <name type="primary">stpg1</name>
</gene>
<organism>
    <name type="scientific">Xenopus laevis</name>
    <name type="common">African clawed frog</name>
    <dbReference type="NCBI Taxonomy" id="8355"/>
    <lineage>
        <taxon>Eukaryota</taxon>
        <taxon>Metazoa</taxon>
        <taxon>Chordata</taxon>
        <taxon>Craniata</taxon>
        <taxon>Vertebrata</taxon>
        <taxon>Euteleostomi</taxon>
        <taxon>Amphibia</taxon>
        <taxon>Batrachia</taxon>
        <taxon>Anura</taxon>
        <taxon>Pipoidea</taxon>
        <taxon>Pipidae</taxon>
        <taxon>Xenopodinae</taxon>
        <taxon>Xenopus</taxon>
        <taxon>Xenopus</taxon>
    </lineage>
</organism>
<dbReference type="EMBL" id="BC106348">
    <property type="protein sequence ID" value="AAI06349.1"/>
    <property type="molecule type" value="mRNA"/>
</dbReference>
<dbReference type="RefSeq" id="NP_001089693.1">
    <property type="nucleotide sequence ID" value="NM_001096224.1"/>
</dbReference>
<dbReference type="RefSeq" id="XP_018100817.1">
    <property type="nucleotide sequence ID" value="XM_018245328.1"/>
</dbReference>
<dbReference type="RefSeq" id="XP_018100818.1">
    <property type="nucleotide sequence ID" value="XM_018245329.1"/>
</dbReference>
<dbReference type="DNASU" id="734755"/>
<dbReference type="GeneID" id="734755"/>
<dbReference type="KEGG" id="xla:734755"/>
<dbReference type="AGR" id="Xenbase:XB-GENE-6255286"/>
<dbReference type="CTD" id="734755"/>
<dbReference type="Xenbase" id="XB-GENE-6255286">
    <property type="gene designation" value="stpg1.L"/>
</dbReference>
<dbReference type="OMA" id="GQYENPI"/>
<dbReference type="OrthoDB" id="186871at2759"/>
<dbReference type="Proteomes" id="UP000186698">
    <property type="component" value="Chromosome 2L"/>
</dbReference>
<dbReference type="Bgee" id="734755">
    <property type="expression patterns" value="Expressed in testis and 12 other cell types or tissues"/>
</dbReference>
<dbReference type="GO" id="GO:0005737">
    <property type="term" value="C:cytoplasm"/>
    <property type="evidence" value="ECO:0007669"/>
    <property type="project" value="UniProtKB-SubCell"/>
</dbReference>
<dbReference type="GO" id="GO:0001939">
    <property type="term" value="C:female pronucleus"/>
    <property type="evidence" value="ECO:0007669"/>
    <property type="project" value="TreeGrafter"/>
</dbReference>
<dbReference type="GO" id="GO:0042585">
    <property type="term" value="C:germinal vesicle"/>
    <property type="evidence" value="ECO:0007669"/>
    <property type="project" value="TreeGrafter"/>
</dbReference>
<dbReference type="GO" id="GO:0001940">
    <property type="term" value="C:male pronucleus"/>
    <property type="evidence" value="ECO:0007669"/>
    <property type="project" value="TreeGrafter"/>
</dbReference>
<dbReference type="GO" id="GO:0003682">
    <property type="term" value="F:chromatin binding"/>
    <property type="evidence" value="ECO:0007669"/>
    <property type="project" value="TreeGrafter"/>
</dbReference>
<dbReference type="GO" id="GO:0042393">
    <property type="term" value="F:histone binding"/>
    <property type="evidence" value="ECO:0007669"/>
    <property type="project" value="TreeGrafter"/>
</dbReference>
<dbReference type="GO" id="GO:0006915">
    <property type="term" value="P:apoptotic process"/>
    <property type="evidence" value="ECO:0007669"/>
    <property type="project" value="UniProtKB-KW"/>
</dbReference>
<dbReference type="GO" id="GO:0044727">
    <property type="term" value="P:epigenetic programing of male pronucleus"/>
    <property type="evidence" value="ECO:0007669"/>
    <property type="project" value="TreeGrafter"/>
</dbReference>
<dbReference type="InterPro" id="IPR010736">
    <property type="entry name" value="SHIPPO-rpt"/>
</dbReference>
<dbReference type="PANTHER" id="PTHR35678">
    <property type="entry name" value="PROTEIN STPG4"/>
    <property type="match status" value="1"/>
</dbReference>
<dbReference type="PANTHER" id="PTHR35678:SF1">
    <property type="entry name" value="PROTEIN STPG4"/>
    <property type="match status" value="1"/>
</dbReference>
<dbReference type="Pfam" id="PF07004">
    <property type="entry name" value="SHIPPO-rpt"/>
    <property type="match status" value="5"/>
</dbReference>
<keyword id="KW-0053">Apoptosis</keyword>
<keyword id="KW-0963">Cytoplasm</keyword>
<keyword id="KW-0539">Nucleus</keyword>
<keyword id="KW-1185">Reference proteome</keyword>
<keyword id="KW-0677">Repeat</keyword>
<comment type="function">
    <text evidence="1">May positively contribute to the induction of apoptosis triggered by O(6)-methylguanine.</text>
</comment>
<comment type="subcellular location">
    <subcellularLocation>
        <location evidence="1">Cytoplasm</location>
    </subcellularLocation>
    <subcellularLocation>
        <location evidence="1">Nucleus</location>
    </subcellularLocation>
</comment>
<comment type="similarity">
    <text evidence="2">Belongs to the STPG1 family.</text>
</comment>
<sequence>MDFHIRNSNLQEIEVRRKPHSRSPKIQQTEAEATAMNFRIPATASSIPTKYQTVFIPTSEKNGFNSRSLRFSYSLTQNENPGPGAYNVARTSADINSVSLSKKGTGGFPSKAPRTLQCKIARTPAPNAYNVYEEFFSKKDFSKGNSSMFQQPIAMEVEDTNHLTPAPNQYSASLTYCHPNNNVSAHAAFVSKTKRELLKPNPVKGPSPCHYKINDSLVKESTKVPVSCFKSKTSRNSLNVISDNPGPASYDPYKSSESEKKIIFLRKHYLCFSAPAMPIPKAPPVPGPGHYDIVDYEGLPKQYMSGAAFVSNTSRWAGDVSGKSLPGPGAYHPEIPGRYSFLYNSNRKWVPA</sequence>
<accession>Q3KQ80</accession>
<reference key="1">
    <citation type="submission" date="2005-10" db="EMBL/GenBank/DDBJ databases">
        <authorList>
            <consortium name="NIH - Xenopus Gene Collection (XGC) project"/>
        </authorList>
    </citation>
    <scope>NUCLEOTIDE SEQUENCE [LARGE SCALE MRNA]</scope>
    <source>
        <tissue>Testis</tissue>
    </source>
</reference>
<protein>
    <recommendedName>
        <fullName>O(6)-methylguanine-induced apoptosis 2</fullName>
        <shortName>MAPO2</shortName>
    </recommendedName>
    <alternativeName>
        <fullName>Sperm-tail PG-rich repeat-containing protein 1</fullName>
    </alternativeName>
</protein>
<name>STPG1_XENLA</name>
<evidence type="ECO:0000250" key="1"/>
<evidence type="ECO:0000305" key="2"/>
<feature type="chain" id="PRO_0000305174" description="O(6)-methylguanine-induced apoptosis 2">
    <location>
        <begin position="1"/>
        <end position="352"/>
    </location>
</feature>
<feature type="repeat" description="STPGR 1">
    <location>
        <begin position="80"/>
        <end position="90"/>
    </location>
</feature>
<feature type="repeat" description="STPGR 2">
    <location>
        <begin position="124"/>
        <end position="139"/>
    </location>
</feature>
<feature type="repeat" description="STPGR 3">
    <location>
        <begin position="165"/>
        <end position="171"/>
    </location>
</feature>
<feature type="repeat" description="STPGR 4">
    <location>
        <begin position="205"/>
        <end position="235"/>
    </location>
</feature>
<feature type="repeat" description="STPGR 5">
    <location>
        <begin position="244"/>
        <end position="263"/>
    </location>
</feature>
<feature type="repeat" description="STPGR 6">
    <location>
        <begin position="286"/>
        <end position="295"/>
    </location>
</feature>
<feature type="repeat" description="STPGR 7">
    <location>
        <begin position="325"/>
        <end position="335"/>
    </location>
</feature>
<proteinExistence type="evidence at transcript level"/>